<gene>
    <name evidence="1" type="primary">groES</name>
    <name evidence="1" type="synonym">groS</name>
    <name type="ordered locus">RF_0408</name>
</gene>
<protein>
    <recommendedName>
        <fullName evidence="1">Co-chaperonin GroES</fullName>
    </recommendedName>
    <alternativeName>
        <fullName evidence="1">10 kDa chaperonin</fullName>
    </alternativeName>
    <alternativeName>
        <fullName evidence="1">Chaperonin-10</fullName>
        <shortName evidence="1">Cpn10</shortName>
    </alternativeName>
</protein>
<accession>Q4UMF3</accession>
<sequence length="95" mass="10572">MSFKPLHDRIAIKPIEHEEKTKGGIIIPDTAKEKPMQGEIVAVGNGIRNKKGEIHPLELKIGDKVLYGKWAGTEIEIKGEKLIVMKETDVFGIIN</sequence>
<comment type="function">
    <text evidence="1">Together with the chaperonin GroEL, plays an essential role in assisting protein folding. The GroEL-GroES system forms a nano-cage that allows encapsulation of the non-native substrate proteins and provides a physical environment optimized to promote and accelerate protein folding. GroES binds to the apical surface of the GroEL ring, thereby capping the opening of the GroEL channel.</text>
</comment>
<comment type="subunit">
    <text evidence="1">Heptamer of 7 subunits arranged in a ring. Interacts with the chaperonin GroEL.</text>
</comment>
<comment type="subcellular location">
    <subcellularLocation>
        <location evidence="1">Cytoplasm</location>
    </subcellularLocation>
</comment>
<comment type="similarity">
    <text evidence="1">Belongs to the GroES chaperonin family.</text>
</comment>
<comment type="sequence caution" evidence="2">
    <conflict type="erroneous initiation">
        <sequence resource="EMBL-CDS" id="AAY61259"/>
    </conflict>
</comment>
<feature type="chain" id="PRO_0000277943" description="Co-chaperonin GroES">
    <location>
        <begin position="1"/>
        <end position="95"/>
    </location>
</feature>
<name>CH10_RICFE</name>
<reference key="1">
    <citation type="journal article" date="2005" name="PLoS Biol.">
        <title>The genome sequence of Rickettsia felis identifies the first putative conjugative plasmid in an obligate intracellular parasite.</title>
        <authorList>
            <person name="Ogata H."/>
            <person name="Renesto P."/>
            <person name="Audic S."/>
            <person name="Robert C."/>
            <person name="Blanc G."/>
            <person name="Fournier P.-E."/>
            <person name="Parinello H."/>
            <person name="Claverie J.-M."/>
            <person name="Raoult D."/>
        </authorList>
    </citation>
    <scope>NUCLEOTIDE SEQUENCE [LARGE SCALE GENOMIC DNA]</scope>
    <source>
        <strain>ATCC VR-1525 / URRWXCal2</strain>
    </source>
</reference>
<dbReference type="EMBL" id="CP000053">
    <property type="protein sequence ID" value="AAY61259.1"/>
    <property type="status" value="ALT_INIT"/>
    <property type="molecule type" value="Genomic_DNA"/>
</dbReference>
<dbReference type="SMR" id="Q4UMF3"/>
<dbReference type="STRING" id="315456.RF_0408"/>
<dbReference type="KEGG" id="rfe:RF_0408"/>
<dbReference type="eggNOG" id="COG0234">
    <property type="taxonomic scope" value="Bacteria"/>
</dbReference>
<dbReference type="HOGENOM" id="CLU_132825_1_0_5"/>
<dbReference type="OrthoDB" id="9806791at2"/>
<dbReference type="Proteomes" id="UP000008548">
    <property type="component" value="Chromosome"/>
</dbReference>
<dbReference type="GO" id="GO:0005737">
    <property type="term" value="C:cytoplasm"/>
    <property type="evidence" value="ECO:0007669"/>
    <property type="project" value="UniProtKB-SubCell"/>
</dbReference>
<dbReference type="GO" id="GO:0005524">
    <property type="term" value="F:ATP binding"/>
    <property type="evidence" value="ECO:0007669"/>
    <property type="project" value="InterPro"/>
</dbReference>
<dbReference type="GO" id="GO:0046872">
    <property type="term" value="F:metal ion binding"/>
    <property type="evidence" value="ECO:0007669"/>
    <property type="project" value="TreeGrafter"/>
</dbReference>
<dbReference type="GO" id="GO:0044183">
    <property type="term" value="F:protein folding chaperone"/>
    <property type="evidence" value="ECO:0007669"/>
    <property type="project" value="InterPro"/>
</dbReference>
<dbReference type="GO" id="GO:0051087">
    <property type="term" value="F:protein-folding chaperone binding"/>
    <property type="evidence" value="ECO:0007669"/>
    <property type="project" value="TreeGrafter"/>
</dbReference>
<dbReference type="GO" id="GO:0051082">
    <property type="term" value="F:unfolded protein binding"/>
    <property type="evidence" value="ECO:0007669"/>
    <property type="project" value="TreeGrafter"/>
</dbReference>
<dbReference type="GO" id="GO:0051085">
    <property type="term" value="P:chaperone cofactor-dependent protein refolding"/>
    <property type="evidence" value="ECO:0007669"/>
    <property type="project" value="TreeGrafter"/>
</dbReference>
<dbReference type="CDD" id="cd00320">
    <property type="entry name" value="cpn10"/>
    <property type="match status" value="1"/>
</dbReference>
<dbReference type="FunFam" id="2.30.33.40:FF:000001">
    <property type="entry name" value="10 kDa chaperonin"/>
    <property type="match status" value="1"/>
</dbReference>
<dbReference type="Gene3D" id="2.30.33.40">
    <property type="entry name" value="GroES chaperonin"/>
    <property type="match status" value="1"/>
</dbReference>
<dbReference type="HAMAP" id="MF_00580">
    <property type="entry name" value="CH10"/>
    <property type="match status" value="1"/>
</dbReference>
<dbReference type="InterPro" id="IPR020818">
    <property type="entry name" value="Chaperonin_GroES"/>
</dbReference>
<dbReference type="InterPro" id="IPR037124">
    <property type="entry name" value="Chaperonin_GroES_sf"/>
</dbReference>
<dbReference type="InterPro" id="IPR018369">
    <property type="entry name" value="Chaprnonin_Cpn10_CS"/>
</dbReference>
<dbReference type="InterPro" id="IPR011032">
    <property type="entry name" value="GroES-like_sf"/>
</dbReference>
<dbReference type="NCBIfam" id="NF001527">
    <property type="entry name" value="PRK00364.1-2"/>
    <property type="match status" value="1"/>
</dbReference>
<dbReference type="NCBIfam" id="NF001529">
    <property type="entry name" value="PRK00364.1-5"/>
    <property type="match status" value="1"/>
</dbReference>
<dbReference type="NCBIfam" id="NF001531">
    <property type="entry name" value="PRK00364.2-2"/>
    <property type="match status" value="1"/>
</dbReference>
<dbReference type="NCBIfam" id="NF001533">
    <property type="entry name" value="PRK00364.2-4"/>
    <property type="match status" value="1"/>
</dbReference>
<dbReference type="PANTHER" id="PTHR10772">
    <property type="entry name" value="10 KDA HEAT SHOCK PROTEIN"/>
    <property type="match status" value="1"/>
</dbReference>
<dbReference type="PANTHER" id="PTHR10772:SF63">
    <property type="entry name" value="20 KDA CHAPERONIN, CHLOROPLASTIC"/>
    <property type="match status" value="1"/>
</dbReference>
<dbReference type="Pfam" id="PF00166">
    <property type="entry name" value="Cpn10"/>
    <property type="match status" value="1"/>
</dbReference>
<dbReference type="PRINTS" id="PR00297">
    <property type="entry name" value="CHAPERONIN10"/>
</dbReference>
<dbReference type="SMART" id="SM00883">
    <property type="entry name" value="Cpn10"/>
    <property type="match status" value="1"/>
</dbReference>
<dbReference type="SUPFAM" id="SSF50129">
    <property type="entry name" value="GroES-like"/>
    <property type="match status" value="1"/>
</dbReference>
<dbReference type="PROSITE" id="PS00681">
    <property type="entry name" value="CHAPERONINS_CPN10"/>
    <property type="match status" value="1"/>
</dbReference>
<evidence type="ECO:0000255" key="1">
    <source>
        <dbReference type="HAMAP-Rule" id="MF_00580"/>
    </source>
</evidence>
<evidence type="ECO:0000305" key="2"/>
<organism>
    <name type="scientific">Rickettsia felis (strain ATCC VR-1525 / URRWXCal2)</name>
    <name type="common">Rickettsia azadi</name>
    <dbReference type="NCBI Taxonomy" id="315456"/>
    <lineage>
        <taxon>Bacteria</taxon>
        <taxon>Pseudomonadati</taxon>
        <taxon>Pseudomonadota</taxon>
        <taxon>Alphaproteobacteria</taxon>
        <taxon>Rickettsiales</taxon>
        <taxon>Rickettsiaceae</taxon>
        <taxon>Rickettsieae</taxon>
        <taxon>Rickettsia</taxon>
        <taxon>spotted fever group</taxon>
    </lineage>
</organism>
<proteinExistence type="inferred from homology"/>
<keyword id="KW-0143">Chaperone</keyword>
<keyword id="KW-0963">Cytoplasm</keyword>